<feature type="chain" id="PRO_1000166533" description="ATP synthase subunit alpha">
    <location>
        <begin position="1"/>
        <end position="505"/>
    </location>
</feature>
<feature type="binding site" evidence="1">
    <location>
        <begin position="170"/>
        <end position="177"/>
    </location>
    <ligand>
        <name>ATP</name>
        <dbReference type="ChEBI" id="CHEBI:30616"/>
    </ligand>
</feature>
<feature type="site" description="Required for activity" evidence="1">
    <location>
        <position position="363"/>
    </location>
</feature>
<reference key="1">
    <citation type="journal article" date="2011" name="MBio">
        <title>Novel metabolic attributes of the genus Cyanothece, comprising a group of unicellular nitrogen-fixing Cyanobacteria.</title>
        <authorList>
            <person name="Bandyopadhyay A."/>
            <person name="Elvitigala T."/>
            <person name="Welsh E."/>
            <person name="Stockel J."/>
            <person name="Liberton M."/>
            <person name="Min H."/>
            <person name="Sherman L.A."/>
            <person name="Pakrasi H.B."/>
        </authorList>
    </citation>
    <scope>NUCLEOTIDE SEQUENCE [LARGE SCALE GENOMIC DNA]</scope>
    <source>
        <strain>PCC 7425 / ATCC 29141</strain>
    </source>
</reference>
<comment type="function">
    <text evidence="1">Produces ATP from ADP in the presence of a proton gradient across the membrane. The alpha chain is a regulatory subunit.</text>
</comment>
<comment type="catalytic activity">
    <reaction evidence="1">
        <text>ATP + H2O + 4 H(+)(in) = ADP + phosphate + 5 H(+)(out)</text>
        <dbReference type="Rhea" id="RHEA:57720"/>
        <dbReference type="ChEBI" id="CHEBI:15377"/>
        <dbReference type="ChEBI" id="CHEBI:15378"/>
        <dbReference type="ChEBI" id="CHEBI:30616"/>
        <dbReference type="ChEBI" id="CHEBI:43474"/>
        <dbReference type="ChEBI" id="CHEBI:456216"/>
        <dbReference type="EC" id="7.1.2.2"/>
    </reaction>
</comment>
<comment type="subunit">
    <text evidence="1">F-type ATPases have 2 components, CF(1) - the catalytic core - and CF(0) - the membrane proton channel. CF(1) has five subunits: alpha(3), beta(3), gamma(1), delta(1), epsilon(1). CF(0) has four main subunits: a, b, b' and c.</text>
</comment>
<comment type="subcellular location">
    <subcellularLocation>
        <location evidence="1">Cellular thylakoid membrane</location>
        <topology evidence="1">Peripheral membrane protein</topology>
    </subcellularLocation>
</comment>
<comment type="similarity">
    <text evidence="1">Belongs to the ATPase alpha/beta chains family.</text>
</comment>
<accession>B8HPK1</accession>
<keyword id="KW-0066">ATP synthesis</keyword>
<keyword id="KW-0067">ATP-binding</keyword>
<keyword id="KW-0139">CF(1)</keyword>
<keyword id="KW-0375">Hydrogen ion transport</keyword>
<keyword id="KW-0406">Ion transport</keyword>
<keyword id="KW-0472">Membrane</keyword>
<keyword id="KW-0547">Nucleotide-binding</keyword>
<keyword id="KW-0793">Thylakoid</keyword>
<keyword id="KW-1278">Translocase</keyword>
<keyword id="KW-0813">Transport</keyword>
<organism>
    <name type="scientific">Cyanothece sp. (strain PCC 7425 / ATCC 29141)</name>
    <dbReference type="NCBI Taxonomy" id="395961"/>
    <lineage>
        <taxon>Bacteria</taxon>
        <taxon>Bacillati</taxon>
        <taxon>Cyanobacteriota</taxon>
        <taxon>Cyanophyceae</taxon>
        <taxon>Gomontiellales</taxon>
        <taxon>Cyanothecaceae</taxon>
        <taxon>Cyanothece</taxon>
    </lineage>
</organism>
<dbReference type="EC" id="7.1.2.2" evidence="1"/>
<dbReference type="EMBL" id="CP001344">
    <property type="protein sequence ID" value="ACL43862.1"/>
    <property type="molecule type" value="Genomic_DNA"/>
</dbReference>
<dbReference type="SMR" id="B8HPK1"/>
<dbReference type="STRING" id="395961.Cyan7425_1492"/>
<dbReference type="KEGG" id="cyn:Cyan7425_1492"/>
<dbReference type="eggNOG" id="COG0056">
    <property type="taxonomic scope" value="Bacteria"/>
</dbReference>
<dbReference type="HOGENOM" id="CLU_010091_2_1_3"/>
<dbReference type="OrthoDB" id="9803053at2"/>
<dbReference type="GO" id="GO:0031676">
    <property type="term" value="C:plasma membrane-derived thylakoid membrane"/>
    <property type="evidence" value="ECO:0007669"/>
    <property type="project" value="UniProtKB-SubCell"/>
</dbReference>
<dbReference type="GO" id="GO:0045259">
    <property type="term" value="C:proton-transporting ATP synthase complex"/>
    <property type="evidence" value="ECO:0007669"/>
    <property type="project" value="UniProtKB-KW"/>
</dbReference>
<dbReference type="GO" id="GO:0043531">
    <property type="term" value="F:ADP binding"/>
    <property type="evidence" value="ECO:0007669"/>
    <property type="project" value="TreeGrafter"/>
</dbReference>
<dbReference type="GO" id="GO:0005524">
    <property type="term" value="F:ATP binding"/>
    <property type="evidence" value="ECO:0007669"/>
    <property type="project" value="UniProtKB-UniRule"/>
</dbReference>
<dbReference type="GO" id="GO:0046933">
    <property type="term" value="F:proton-transporting ATP synthase activity, rotational mechanism"/>
    <property type="evidence" value="ECO:0007669"/>
    <property type="project" value="UniProtKB-UniRule"/>
</dbReference>
<dbReference type="CDD" id="cd18113">
    <property type="entry name" value="ATP-synt_F1_alpha_C"/>
    <property type="match status" value="1"/>
</dbReference>
<dbReference type="CDD" id="cd18116">
    <property type="entry name" value="ATP-synt_F1_alpha_N"/>
    <property type="match status" value="1"/>
</dbReference>
<dbReference type="CDD" id="cd01132">
    <property type="entry name" value="F1-ATPase_alpha_CD"/>
    <property type="match status" value="1"/>
</dbReference>
<dbReference type="FunFam" id="1.20.150.20:FF:000001">
    <property type="entry name" value="ATP synthase subunit alpha"/>
    <property type="match status" value="1"/>
</dbReference>
<dbReference type="FunFam" id="2.40.30.20:FF:000001">
    <property type="entry name" value="ATP synthase subunit alpha"/>
    <property type="match status" value="1"/>
</dbReference>
<dbReference type="FunFam" id="3.40.50.300:FF:000002">
    <property type="entry name" value="ATP synthase subunit alpha"/>
    <property type="match status" value="1"/>
</dbReference>
<dbReference type="Gene3D" id="2.40.30.20">
    <property type="match status" value="1"/>
</dbReference>
<dbReference type="Gene3D" id="1.20.150.20">
    <property type="entry name" value="ATP synthase alpha/beta chain, C-terminal domain"/>
    <property type="match status" value="1"/>
</dbReference>
<dbReference type="Gene3D" id="3.40.50.300">
    <property type="entry name" value="P-loop containing nucleotide triphosphate hydrolases"/>
    <property type="match status" value="1"/>
</dbReference>
<dbReference type="HAMAP" id="MF_01346">
    <property type="entry name" value="ATP_synth_alpha_bact"/>
    <property type="match status" value="1"/>
</dbReference>
<dbReference type="InterPro" id="IPR023366">
    <property type="entry name" value="ATP_synth_asu-like_sf"/>
</dbReference>
<dbReference type="InterPro" id="IPR000793">
    <property type="entry name" value="ATP_synth_asu_C"/>
</dbReference>
<dbReference type="InterPro" id="IPR038376">
    <property type="entry name" value="ATP_synth_asu_C_sf"/>
</dbReference>
<dbReference type="InterPro" id="IPR033732">
    <property type="entry name" value="ATP_synth_F1_a_nt-bd_dom"/>
</dbReference>
<dbReference type="InterPro" id="IPR005294">
    <property type="entry name" value="ATP_synth_F1_asu"/>
</dbReference>
<dbReference type="InterPro" id="IPR020003">
    <property type="entry name" value="ATPase_a/bsu_AS"/>
</dbReference>
<dbReference type="InterPro" id="IPR004100">
    <property type="entry name" value="ATPase_F1/V1/A1_a/bsu_N"/>
</dbReference>
<dbReference type="InterPro" id="IPR036121">
    <property type="entry name" value="ATPase_F1/V1/A1_a/bsu_N_sf"/>
</dbReference>
<dbReference type="InterPro" id="IPR000194">
    <property type="entry name" value="ATPase_F1/V1/A1_a/bsu_nucl-bd"/>
</dbReference>
<dbReference type="InterPro" id="IPR027417">
    <property type="entry name" value="P-loop_NTPase"/>
</dbReference>
<dbReference type="NCBIfam" id="TIGR00962">
    <property type="entry name" value="atpA"/>
    <property type="match status" value="1"/>
</dbReference>
<dbReference type="NCBIfam" id="NF009884">
    <property type="entry name" value="PRK13343.1"/>
    <property type="match status" value="1"/>
</dbReference>
<dbReference type="PANTHER" id="PTHR48082">
    <property type="entry name" value="ATP SYNTHASE SUBUNIT ALPHA, MITOCHONDRIAL"/>
    <property type="match status" value="1"/>
</dbReference>
<dbReference type="PANTHER" id="PTHR48082:SF2">
    <property type="entry name" value="ATP SYNTHASE SUBUNIT ALPHA, MITOCHONDRIAL"/>
    <property type="match status" value="1"/>
</dbReference>
<dbReference type="Pfam" id="PF00006">
    <property type="entry name" value="ATP-synt_ab"/>
    <property type="match status" value="1"/>
</dbReference>
<dbReference type="Pfam" id="PF00306">
    <property type="entry name" value="ATP-synt_ab_C"/>
    <property type="match status" value="1"/>
</dbReference>
<dbReference type="Pfam" id="PF02874">
    <property type="entry name" value="ATP-synt_ab_N"/>
    <property type="match status" value="1"/>
</dbReference>
<dbReference type="PIRSF" id="PIRSF039088">
    <property type="entry name" value="F_ATPase_subunit_alpha"/>
    <property type="match status" value="1"/>
</dbReference>
<dbReference type="SUPFAM" id="SSF47917">
    <property type="entry name" value="C-terminal domain of alpha and beta subunits of F1 ATP synthase"/>
    <property type="match status" value="1"/>
</dbReference>
<dbReference type="SUPFAM" id="SSF50615">
    <property type="entry name" value="N-terminal domain of alpha and beta subunits of F1 ATP synthase"/>
    <property type="match status" value="1"/>
</dbReference>
<dbReference type="SUPFAM" id="SSF52540">
    <property type="entry name" value="P-loop containing nucleoside triphosphate hydrolases"/>
    <property type="match status" value="1"/>
</dbReference>
<dbReference type="PROSITE" id="PS00152">
    <property type="entry name" value="ATPASE_ALPHA_BETA"/>
    <property type="match status" value="1"/>
</dbReference>
<evidence type="ECO:0000255" key="1">
    <source>
        <dbReference type="HAMAP-Rule" id="MF_01346"/>
    </source>
</evidence>
<proteinExistence type="inferred from homology"/>
<protein>
    <recommendedName>
        <fullName evidence="1">ATP synthase subunit alpha</fullName>
        <ecNumber evidence="1">7.1.2.2</ecNumber>
    </recommendedName>
    <alternativeName>
        <fullName evidence="1">ATP synthase F1 sector subunit alpha</fullName>
    </alternativeName>
    <alternativeName>
        <fullName evidence="1">F-ATPase subunit alpha</fullName>
    </alternativeName>
</protein>
<gene>
    <name evidence="1" type="primary">atpA</name>
    <name type="ordered locus">Cyan7425_1492</name>
</gene>
<sequence length="505" mass="54698">MVSIRPDEISSIIRQQIEQYDQQVKVENVGTVLQVGDGIARVYGLEKVMASELLEFEDGTVGIALNLEEDNVGVVLMGEGRDLEEGSTVRSTGRVAQVPVGEGAIGRVVDALVRPIDGKGEIHSTETRLLESPAPGIVQRKSVYEPMQTGITAIDAMIPIGRGQRELIIGDRQTGKTAVAIDTILNQKGSGVICVYVAIGQKASTVAQVVNVLRERGALEYTIVVAANASDPAALQYLAPYTGATLAEYFMYKGKATLVVYDDLSKQAQAYRQMSLLLRRPPGREAYPGDVFYLHSRLLERAAKLSPELGEGSMTALPVVETQAGDVSAYIPTNVISITDGQIFLSSDLFNAGLRPAINAGISVSRVGSAAQIKAMKQVAGKLKLELAQFDELQAFAQFASDLDKATQNQLARGQRLRELLKQPQYSPIPVEEQVALIYAGTNGYLDEIPTDKVTSFTAGFREYLHNSQPKYGELVRSEKKLGDEAEGLLKSALNDYKKTFLAMA</sequence>
<name>ATPA_CYAP4</name>